<organism>
    <name type="scientific">Escherichia coli (strain K12 / MC4100 / BW2952)</name>
    <dbReference type="NCBI Taxonomy" id="595496"/>
    <lineage>
        <taxon>Bacteria</taxon>
        <taxon>Pseudomonadati</taxon>
        <taxon>Pseudomonadota</taxon>
        <taxon>Gammaproteobacteria</taxon>
        <taxon>Enterobacterales</taxon>
        <taxon>Enterobacteriaceae</taxon>
        <taxon>Escherichia</taxon>
    </lineage>
</organism>
<protein>
    <recommendedName>
        <fullName evidence="1">Homoserine O-succinyltransferase</fullName>
        <shortName evidence="1">HST</shortName>
        <ecNumber evidence="1">2.3.1.46</ecNumber>
    </recommendedName>
    <alternativeName>
        <fullName evidence="1">Homoserine transsuccinylase</fullName>
        <shortName evidence="1">HTS</shortName>
    </alternativeName>
</protein>
<keyword id="KW-0012">Acyltransferase</keyword>
<keyword id="KW-0028">Amino-acid biosynthesis</keyword>
<keyword id="KW-0963">Cytoplasm</keyword>
<keyword id="KW-0486">Methionine biosynthesis</keyword>
<keyword id="KW-0808">Transferase</keyword>
<gene>
    <name evidence="1" type="primary">metAS</name>
    <name type="ordered locus">BWG_3669</name>
</gene>
<evidence type="ECO:0000255" key="1">
    <source>
        <dbReference type="HAMAP-Rule" id="MF_00295"/>
    </source>
</evidence>
<name>METAS_ECOBW</name>
<accession>C5A0V0</accession>
<sequence length="309" mass="35727">MPIRVPDELPAVNFLREENVFVMTTSRASGQEIRPLKVLILNLMPKKIETENQFLRLLSNSPLQVDIQLLRIDSRESRNTPAEHLNNFYCNFEDIQDQNFDGLIVTGAPLGLVEFNDVAYWPQIKQVLEWSKDHVTSTLFVCWAVQAALNILYGIPKQTRTEKLSGVYEHHILHPHALLTRGFDDSFLAPHSRYADFPAALIRDYTDLEILAETEEGDAYLFASKDKRIAFVTGHPEYDAQTLAQEFFRDVEAGLDPDVPYNYFPHNDPQNTPRASWRSHGNLLFTNWLNYYVYQITPYDLRHMNPTLD</sequence>
<reference key="1">
    <citation type="journal article" date="2009" name="J. Bacteriol.">
        <title>Genomic sequencing reveals regulatory mutations and recombinational events in the widely used MC4100 lineage of Escherichia coli K-12.</title>
        <authorList>
            <person name="Ferenci T."/>
            <person name="Zhou Z."/>
            <person name="Betteridge T."/>
            <person name="Ren Y."/>
            <person name="Liu Y."/>
            <person name="Feng L."/>
            <person name="Reeves P.R."/>
            <person name="Wang L."/>
        </authorList>
    </citation>
    <scope>NUCLEOTIDE SEQUENCE [LARGE SCALE GENOMIC DNA]</scope>
    <source>
        <strain>K12 / MC4100 / BW2952</strain>
    </source>
</reference>
<dbReference type="EC" id="2.3.1.46" evidence="1"/>
<dbReference type="EMBL" id="CP001396">
    <property type="protein sequence ID" value="ACR63429.1"/>
    <property type="molecule type" value="Genomic_DNA"/>
</dbReference>
<dbReference type="SMR" id="C5A0V0"/>
<dbReference type="KEGG" id="ebw:BWG_3669"/>
<dbReference type="HOGENOM" id="CLU_057851_0_1_6"/>
<dbReference type="UniPathway" id="UPA00051">
    <property type="reaction ID" value="UER00075"/>
</dbReference>
<dbReference type="GO" id="GO:0005737">
    <property type="term" value="C:cytoplasm"/>
    <property type="evidence" value="ECO:0007669"/>
    <property type="project" value="UniProtKB-SubCell"/>
</dbReference>
<dbReference type="GO" id="GO:0004414">
    <property type="term" value="F:homoserine O-acetyltransferase activity"/>
    <property type="evidence" value="ECO:0007669"/>
    <property type="project" value="UniProtKB-UniRule"/>
</dbReference>
<dbReference type="GO" id="GO:0008899">
    <property type="term" value="F:homoserine O-succinyltransferase activity"/>
    <property type="evidence" value="ECO:0007669"/>
    <property type="project" value="UniProtKB-EC"/>
</dbReference>
<dbReference type="GO" id="GO:0019281">
    <property type="term" value="P:L-methionine biosynthetic process from homoserine via O-succinyl-L-homoserine and cystathionine"/>
    <property type="evidence" value="ECO:0007669"/>
    <property type="project" value="InterPro"/>
</dbReference>
<dbReference type="CDD" id="cd03131">
    <property type="entry name" value="GATase1_HTS"/>
    <property type="match status" value="1"/>
</dbReference>
<dbReference type="FunFam" id="3.40.50.880:FF:000004">
    <property type="entry name" value="Homoserine O-succinyltransferase"/>
    <property type="match status" value="1"/>
</dbReference>
<dbReference type="Gene3D" id="3.40.50.880">
    <property type="match status" value="1"/>
</dbReference>
<dbReference type="HAMAP" id="MF_00295">
    <property type="entry name" value="MetA_acyltransf"/>
    <property type="match status" value="1"/>
</dbReference>
<dbReference type="InterPro" id="IPR029062">
    <property type="entry name" value="Class_I_gatase-like"/>
</dbReference>
<dbReference type="InterPro" id="IPR005697">
    <property type="entry name" value="HST_MetA"/>
</dbReference>
<dbReference type="InterPro" id="IPR033752">
    <property type="entry name" value="MetA_family"/>
</dbReference>
<dbReference type="NCBIfam" id="TIGR01001">
    <property type="entry name" value="metA"/>
    <property type="match status" value="1"/>
</dbReference>
<dbReference type="PANTHER" id="PTHR20919">
    <property type="entry name" value="HOMOSERINE O-SUCCINYLTRANSFERASE"/>
    <property type="match status" value="1"/>
</dbReference>
<dbReference type="PANTHER" id="PTHR20919:SF0">
    <property type="entry name" value="HOMOSERINE O-SUCCINYLTRANSFERASE"/>
    <property type="match status" value="1"/>
</dbReference>
<dbReference type="Pfam" id="PF04204">
    <property type="entry name" value="HTS"/>
    <property type="match status" value="1"/>
</dbReference>
<dbReference type="PIRSF" id="PIRSF000450">
    <property type="entry name" value="H_ser_succinyltr"/>
    <property type="match status" value="1"/>
</dbReference>
<dbReference type="SUPFAM" id="SSF52317">
    <property type="entry name" value="Class I glutamine amidotransferase-like"/>
    <property type="match status" value="1"/>
</dbReference>
<feature type="chain" id="PRO_1000204919" description="Homoserine O-succinyltransferase">
    <location>
        <begin position="1"/>
        <end position="309"/>
    </location>
</feature>
<feature type="active site" description="Acyl-thioester intermediate" evidence="1">
    <location>
        <position position="142"/>
    </location>
</feature>
<feature type="active site" description="Proton acceptor" evidence="1">
    <location>
        <position position="235"/>
    </location>
</feature>
<feature type="active site" evidence="1">
    <location>
        <position position="237"/>
    </location>
</feature>
<feature type="binding site" evidence="1">
    <location>
        <position position="163"/>
    </location>
    <ligand>
        <name>substrate</name>
    </ligand>
</feature>
<feature type="binding site" evidence="1">
    <location>
        <position position="192"/>
    </location>
    <ligand>
        <name>substrate</name>
    </ligand>
</feature>
<feature type="binding site" evidence="1">
    <location>
        <position position="249"/>
    </location>
    <ligand>
        <name>substrate</name>
    </ligand>
</feature>
<feature type="site" description="Important for acyl-CoA specificity" evidence="1">
    <location>
        <position position="111"/>
    </location>
</feature>
<feature type="site" description="Important for substrate specificity" evidence="1">
    <location>
        <position position="192"/>
    </location>
</feature>
<proteinExistence type="inferred from homology"/>
<comment type="function">
    <text evidence="1">Transfers a succinyl group from succinyl-CoA to L-homoserine, forming succinyl-L-homoserine.</text>
</comment>
<comment type="catalytic activity">
    <reaction evidence="1">
        <text>L-homoserine + succinyl-CoA = O-succinyl-L-homoserine + CoA</text>
        <dbReference type="Rhea" id="RHEA:22008"/>
        <dbReference type="ChEBI" id="CHEBI:57287"/>
        <dbReference type="ChEBI" id="CHEBI:57292"/>
        <dbReference type="ChEBI" id="CHEBI:57476"/>
        <dbReference type="ChEBI" id="CHEBI:57661"/>
        <dbReference type="EC" id="2.3.1.46"/>
    </reaction>
</comment>
<comment type="pathway">
    <text evidence="1">Amino-acid biosynthesis; L-methionine biosynthesis via de novo pathway; O-succinyl-L-homoserine from L-homoserine: step 1/1.</text>
</comment>
<comment type="subunit">
    <text evidence="1">Homodimer.</text>
</comment>
<comment type="subcellular location">
    <subcellularLocation>
        <location evidence="1">Cytoplasm</location>
    </subcellularLocation>
</comment>
<comment type="similarity">
    <text evidence="1">Belongs to the MetA family.</text>
</comment>